<feature type="transit peptide" description="Chloroplast">
    <location>
        <begin position="1"/>
        <end position="58"/>
    </location>
</feature>
<feature type="chain" id="PRO_0000030241" description="Ribulose bisphosphate carboxylase/oxygenase activase, chloroplastic">
    <location>
        <begin position="59"/>
        <end position="472"/>
    </location>
</feature>
<feature type="region of interest" description="Disordered" evidence="2">
    <location>
        <begin position="448"/>
        <end position="472"/>
    </location>
</feature>
<feature type="compositionally biased region" description="Basic and acidic residues" evidence="2">
    <location>
        <begin position="452"/>
        <end position="465"/>
    </location>
</feature>
<feature type="binding site" evidence="1">
    <location>
        <begin position="163"/>
        <end position="170"/>
    </location>
    <ligand>
        <name>ATP</name>
        <dbReference type="ChEBI" id="CHEBI:30616"/>
    </ligand>
</feature>
<feature type="splice variant" id="VSP_005541" description="In isoform 2." evidence="3">
    <location>
        <begin position="436"/>
        <end position="472"/>
    </location>
</feature>
<feature type="sequence conflict" description="In Ref. 1; AAA34038." evidence="3" ref="1">
    <original>F</original>
    <variation>L</variation>
    <location>
        <position position="129"/>
    </location>
</feature>
<feature type="sequence conflict" description="In Ref. 1; AAA34038." evidence="3" ref="1">
    <original>M</original>
    <variation>L</variation>
    <location>
        <position position="253"/>
    </location>
</feature>
<feature type="sequence conflict" description="In Ref. 1; AAA34038." evidence="3" ref="1">
    <original>H</original>
    <variation>D</variation>
    <location>
        <position position="352"/>
    </location>
</feature>
<sequence length="472" mass="51559">MATAVSTVGAATRAPLNLNGSSAGASVPTSGFLGSSLKKHTNVRFPSSSRTTSMTVKAAENEEKNTDKWAHLAKDFSDDQLDIRRGKGMVDSLFQAPADAGTHVPIQSSFEYESQGLRKYDIDNMLGDFYIAPAFMDKLVVHITKNFLNLPNIKIPLILGVWGGKGQGKSFQCELVFAKLGINPIMMSAGELESGNAGEPAKLIRQRYREAADLIAKGKMCALFINDLEPGAGRMGGTTQYTVNNQMVNATLMNIADNPTNVQLPGMYNKQDNARVPIIVTGNDFSTLYAPLIRDGRMEKFYWAPTREDRIGVCTGIFKTDKVPAEHVVKLVDAFPGQSIDFFGALRARVYHDEVRKWVNSVGVDNVGKKLVNSKDGPPVFEQPEMTLQKLMEYGNMLVQEQENVKRVQLADQYMSSAALGDANKDAIDRGTFFGKAAQQVSLPVAQGCTDPEAKNYDPTARSDDGSCTYNL</sequence>
<organism>
    <name type="scientific">Spinacia oleracea</name>
    <name type="common">Spinach</name>
    <dbReference type="NCBI Taxonomy" id="3562"/>
    <lineage>
        <taxon>Eukaryota</taxon>
        <taxon>Viridiplantae</taxon>
        <taxon>Streptophyta</taxon>
        <taxon>Embryophyta</taxon>
        <taxon>Tracheophyta</taxon>
        <taxon>Spermatophyta</taxon>
        <taxon>Magnoliopsida</taxon>
        <taxon>eudicotyledons</taxon>
        <taxon>Gunneridae</taxon>
        <taxon>Pentapetalae</taxon>
        <taxon>Caryophyllales</taxon>
        <taxon>Chenopodiaceae</taxon>
        <taxon>Chenopodioideae</taxon>
        <taxon>Anserineae</taxon>
        <taxon>Spinacia</taxon>
    </lineage>
</organism>
<accession>P10871</accession>
<accession>Q43327</accession>
<evidence type="ECO:0000255" key="1"/>
<evidence type="ECO:0000256" key="2">
    <source>
        <dbReference type="SAM" id="MobiDB-lite"/>
    </source>
</evidence>
<evidence type="ECO:0000305" key="3"/>
<proteinExistence type="evidence at protein level"/>
<keyword id="KW-0025">Alternative splicing</keyword>
<keyword id="KW-0067">ATP-binding</keyword>
<keyword id="KW-0150">Chloroplast</keyword>
<keyword id="KW-0903">Direct protein sequencing</keyword>
<keyword id="KW-0547">Nucleotide-binding</keyword>
<keyword id="KW-0934">Plastid</keyword>
<keyword id="KW-1185">Reference proteome</keyword>
<keyword id="KW-0809">Transit peptide</keyword>
<protein>
    <recommendedName>
        <fullName>Ribulose bisphosphate carboxylase/oxygenase activase, chloroplastic</fullName>
        <shortName>RA</shortName>
        <shortName>RuBisCO activase</shortName>
    </recommendedName>
</protein>
<reference key="1">
    <citation type="journal article" date="1988" name="Proc. Natl. Acad. Sci. U.S.A.">
        <title>Structure and expression of spinach leaf cDNA encoding ribulosebisphosphate carboxylase/oxygenase activase.</title>
        <authorList>
            <person name="Werneke J.M."/>
            <person name="Zielinski R.E."/>
            <person name="Ogren W.L."/>
        </authorList>
    </citation>
    <scope>NUCLEOTIDE SEQUENCE [MRNA]</scope>
    <scope>PARTIAL PROTEIN SEQUENCE</scope>
    <source>
        <tissue>Leaf</tissue>
    </source>
</reference>
<reference key="2">
    <citation type="journal article" date="1989" name="Plant Cell">
        <title>Alternative mRNA splicing generates the two ribulosebisphosphate carboxylase/oxygenase activase polypeptides in spinach and Arabidopsis.</title>
        <authorList>
            <person name="Werneke J.M."/>
            <person name="Chatfield J.M."/>
            <person name="Ogren W.L."/>
        </authorList>
    </citation>
    <scope>NUCLEOTIDE SEQUENCE</scope>
    <scope>ALTERNATIVE SPLICING</scope>
</reference>
<dbReference type="EMBL" id="J03610">
    <property type="protein sequence ID" value="AAA34038.1"/>
    <property type="molecule type" value="mRNA"/>
</dbReference>
<dbReference type="EMBL" id="S45033">
    <property type="protein sequence ID" value="AAD13840.1"/>
    <property type="molecule type" value="Genomic_DNA"/>
</dbReference>
<dbReference type="EMBL" id="S45033">
    <property type="protein sequence ID" value="AAD13841.1"/>
    <property type="molecule type" value="Genomic_DNA"/>
</dbReference>
<dbReference type="PIR" id="A31082">
    <property type="entry name" value="A31082"/>
</dbReference>
<dbReference type="SMR" id="P10871"/>
<dbReference type="IntAct" id="P10871">
    <property type="interactions" value="1"/>
</dbReference>
<dbReference type="Proteomes" id="UP001155700">
    <property type="component" value="Unplaced"/>
</dbReference>
<dbReference type="GO" id="GO:0009570">
    <property type="term" value="C:chloroplast stroma"/>
    <property type="evidence" value="ECO:0000318"/>
    <property type="project" value="GO_Central"/>
</dbReference>
<dbReference type="GO" id="GO:0009579">
    <property type="term" value="C:thylakoid"/>
    <property type="evidence" value="ECO:0007669"/>
    <property type="project" value="TreeGrafter"/>
</dbReference>
<dbReference type="GO" id="GO:0005524">
    <property type="term" value="F:ATP binding"/>
    <property type="evidence" value="ECO:0007669"/>
    <property type="project" value="UniProtKB-KW"/>
</dbReference>
<dbReference type="GO" id="GO:0016887">
    <property type="term" value="F:ATP hydrolysis activity"/>
    <property type="evidence" value="ECO:0007669"/>
    <property type="project" value="InterPro"/>
</dbReference>
<dbReference type="GO" id="GO:0046863">
    <property type="term" value="F:ribulose-1,5-bisphosphate carboxylase/oxygenase activator activity"/>
    <property type="evidence" value="ECO:0000318"/>
    <property type="project" value="GO_Central"/>
</dbReference>
<dbReference type="FunFam" id="1.10.8.1070:FF:000001">
    <property type="entry name" value="Ribulose bisphosphate carboxylase/oxygenase activase, chloroplastic"/>
    <property type="match status" value="1"/>
</dbReference>
<dbReference type="FunFam" id="3.40.50.300:FF:000258">
    <property type="entry name" value="Ribulose bisphosphate carboxylase/oxygenase activase, chloroplastic"/>
    <property type="match status" value="1"/>
</dbReference>
<dbReference type="Gene3D" id="1.10.8.1070">
    <property type="match status" value="1"/>
</dbReference>
<dbReference type="Gene3D" id="3.40.50.300">
    <property type="entry name" value="P-loop containing nucleotide triphosphate hydrolases"/>
    <property type="match status" value="1"/>
</dbReference>
<dbReference type="InterPro" id="IPR003959">
    <property type="entry name" value="ATPase_AAA_core"/>
</dbReference>
<dbReference type="InterPro" id="IPR027417">
    <property type="entry name" value="P-loop_NTPase"/>
</dbReference>
<dbReference type="InterPro" id="IPR044960">
    <property type="entry name" value="RCA-like"/>
</dbReference>
<dbReference type="InterPro" id="IPR048571">
    <property type="entry name" value="RuBisCO_activase_AAA_helical"/>
</dbReference>
<dbReference type="PANTHER" id="PTHR32429">
    <property type="match status" value="1"/>
</dbReference>
<dbReference type="PANTHER" id="PTHR32429:SF32">
    <property type="entry name" value="RIBULOSE BISPHOSPHATE CARBOXYLASE_OXYGENASE ACTIVASE, CHLOROPLASTIC"/>
    <property type="match status" value="1"/>
</dbReference>
<dbReference type="Pfam" id="PF00004">
    <property type="entry name" value="AAA"/>
    <property type="match status" value="1"/>
</dbReference>
<dbReference type="Pfam" id="PF21228">
    <property type="entry name" value="RuBisCO_activase_AAA_helical"/>
    <property type="match status" value="1"/>
</dbReference>
<dbReference type="SUPFAM" id="SSF52540">
    <property type="entry name" value="P-loop containing nucleoside triphosphate hydrolases"/>
    <property type="match status" value="1"/>
</dbReference>
<name>RCA_SPIOL</name>
<comment type="function">
    <text>Activation of RuBisCO (ribulose-1,5-bisphosphate carboxylase/oxygenase; EC 4.1.1.39) involves the ATP-dependent carboxylation of the epsilon-amino group of lysine leading to a carbamate structure.</text>
</comment>
<comment type="subcellular location">
    <subcellularLocation>
        <location>Plastid</location>
        <location>Chloroplast stroma</location>
    </subcellularLocation>
</comment>
<comment type="alternative products">
    <event type="alternative splicing"/>
    <isoform>
        <id>P10871-1</id>
        <name>1</name>
        <name>45 kDa</name>
        <sequence type="displayed"/>
    </isoform>
    <isoform>
        <id>P10871-2</id>
        <name>2</name>
        <name>41 kDa</name>
        <sequence type="described" ref="VSP_005541"/>
    </isoform>
</comment>
<comment type="similarity">
    <text evidence="3">Belongs to the RuBisCO activase family.</text>
</comment>